<evidence type="ECO:0000255" key="1"/>
<evidence type="ECO:0000305" key="2"/>
<gene>
    <name type="primary">flaB2</name>
    <name type="ordered locus">VNG_0961G</name>
</gene>
<proteinExistence type="inferred from homology"/>
<protein>
    <recommendedName>
        <fullName>Flagellin B2</fullName>
    </recommendedName>
</protein>
<sequence length="196" mass="20682">MFEFITDEDERGQVGIGTLIVFIAMVLVAAIAAGVLINTAGYLQSKGSATGEEASAQVSNRINIVSAYGNVDTSGSTEVVNYANLTVRQAAGADNINLSKSTIQWIGPDTATTLTYDGTTADAENFTTNSIKGDNADVLVDQSDRIEIVMDAAEITTNGLKAGEEVQLTVTTQYGSKTTYWANVPESLKDKNAVTL</sequence>
<dbReference type="EMBL" id="M19884">
    <property type="protein sequence ID" value="AAA72644.1"/>
    <property type="molecule type" value="Genomic_DNA"/>
</dbReference>
<dbReference type="EMBL" id="AE004437">
    <property type="protein sequence ID" value="AAG19384.1"/>
    <property type="status" value="ALT_INIT"/>
    <property type="molecule type" value="Genomic_DNA"/>
</dbReference>
<dbReference type="EMBL" id="X05383">
    <property type="protein sequence ID" value="CAA28975.1"/>
    <property type="molecule type" value="Genomic_DNA"/>
</dbReference>
<dbReference type="PIR" id="D28944">
    <property type="entry name" value="D28944"/>
</dbReference>
<dbReference type="PIR" id="D84252">
    <property type="entry name" value="D84252"/>
</dbReference>
<dbReference type="RefSeq" id="WP_012289250.1">
    <property type="nucleotide sequence ID" value="NC_002607.1"/>
</dbReference>
<dbReference type="SMR" id="P13077"/>
<dbReference type="FunCoup" id="P13077">
    <property type="interactions" value="2"/>
</dbReference>
<dbReference type="KEGG" id="hal:VNG_0961G"/>
<dbReference type="PATRIC" id="fig|64091.14.peg.739"/>
<dbReference type="HOGENOM" id="CLU_051124_1_0_2"/>
<dbReference type="InParanoid" id="P13077"/>
<dbReference type="OrthoDB" id="102632at2157"/>
<dbReference type="PhylomeDB" id="P13077"/>
<dbReference type="Proteomes" id="UP000000554">
    <property type="component" value="Chromosome"/>
</dbReference>
<dbReference type="GO" id="GO:0097589">
    <property type="term" value="C:archaeal-type flagellum"/>
    <property type="evidence" value="ECO:0007669"/>
    <property type="project" value="UniProtKB-SubCell"/>
</dbReference>
<dbReference type="GO" id="GO:0005198">
    <property type="term" value="F:structural molecule activity"/>
    <property type="evidence" value="ECO:0007669"/>
    <property type="project" value="InterPro"/>
</dbReference>
<dbReference type="GO" id="GO:0097588">
    <property type="term" value="P:archaeal or bacterial-type flagellum-dependent cell motility"/>
    <property type="evidence" value="ECO:0007669"/>
    <property type="project" value="InterPro"/>
</dbReference>
<dbReference type="InterPro" id="IPR013373">
    <property type="entry name" value="Flagellin/pilin_N_arc"/>
</dbReference>
<dbReference type="InterPro" id="IPR002774">
    <property type="entry name" value="Flagellin_arc"/>
</dbReference>
<dbReference type="NCBIfam" id="TIGR02537">
    <property type="entry name" value="arch_flag_Nterm"/>
    <property type="match status" value="1"/>
</dbReference>
<dbReference type="PANTHER" id="PTHR35903">
    <property type="entry name" value="FLAGELLIN B1"/>
    <property type="match status" value="1"/>
</dbReference>
<dbReference type="PANTHER" id="PTHR35903:SF1">
    <property type="entry name" value="FLAGELLIN B1"/>
    <property type="match status" value="1"/>
</dbReference>
<dbReference type="Pfam" id="PF01917">
    <property type="entry name" value="Arch_flagellin"/>
    <property type="match status" value="1"/>
</dbReference>
<accession>P13077</accession>
<accession>Q48309</accession>
<accession>Q9HQX5</accession>
<reference key="1">
    <citation type="journal article" date="1988" name="J. Biol. Chem.">
        <title>Halobacterial flagellins are encoded by a multigene family. Characterization of five flagellin genes.</title>
        <authorList>
            <person name="Gerl L."/>
            <person name="Sumper M."/>
        </authorList>
    </citation>
    <scope>NUCLEOTIDE SEQUENCE [GENOMIC DNA]</scope>
</reference>
<reference key="2">
    <citation type="journal article" date="2000" name="Proc. Natl. Acad. Sci. U.S.A.">
        <title>Genome sequence of Halobacterium species NRC-1.</title>
        <authorList>
            <person name="Ng W.V."/>
            <person name="Kennedy S.P."/>
            <person name="Mahairas G.G."/>
            <person name="Berquist B."/>
            <person name="Pan M."/>
            <person name="Shukla H.D."/>
            <person name="Lasky S.R."/>
            <person name="Baliga N.S."/>
            <person name="Thorsson V."/>
            <person name="Sbrogna J."/>
            <person name="Swartzell S."/>
            <person name="Weir D."/>
            <person name="Hall J."/>
            <person name="Dahl T.A."/>
            <person name="Welti R."/>
            <person name="Goo Y.A."/>
            <person name="Leithauser B."/>
            <person name="Keller K."/>
            <person name="Cruz R."/>
            <person name="Danson M.J."/>
            <person name="Hough D.W."/>
            <person name="Maddocks D.G."/>
            <person name="Jablonski P.E."/>
            <person name="Krebs M.P."/>
            <person name="Angevine C.M."/>
            <person name="Dale H."/>
            <person name="Isenbarger T.A."/>
            <person name="Peck R.F."/>
            <person name="Pohlschroder M."/>
            <person name="Spudich J.L."/>
            <person name="Jung K.-H."/>
            <person name="Alam M."/>
            <person name="Freitas T."/>
            <person name="Hou S."/>
            <person name="Daniels C.J."/>
            <person name="Dennis P.P."/>
            <person name="Omer A.D."/>
            <person name="Ebhardt H."/>
            <person name="Lowe T.M."/>
            <person name="Liang P."/>
            <person name="Riley M."/>
            <person name="Hood L."/>
            <person name="DasSarma S."/>
        </authorList>
    </citation>
    <scope>NUCLEOTIDE SEQUENCE [LARGE SCALE GENOMIC DNA]</scope>
    <source>
        <strain>ATCC 700922 / JCM 11081 / NRC-1</strain>
    </source>
</reference>
<reference key="3">
    <citation type="journal article" date="1987" name="Biochim. Biophys. Acta">
        <title>Halobacterial glycoprotein biosynthesis.</title>
        <authorList>
            <person name="Sumper M."/>
        </authorList>
    </citation>
    <scope>NUCLEOTIDE SEQUENCE [GENOMIC DNA] OF 16-196</scope>
</reference>
<name>FLAB2_HALSA</name>
<organism>
    <name type="scientific">Halobacterium salinarum (strain ATCC 700922 / JCM 11081 / NRC-1)</name>
    <name type="common">Halobacterium halobium</name>
    <dbReference type="NCBI Taxonomy" id="64091"/>
    <lineage>
        <taxon>Archaea</taxon>
        <taxon>Methanobacteriati</taxon>
        <taxon>Methanobacteriota</taxon>
        <taxon>Stenosarchaea group</taxon>
        <taxon>Halobacteria</taxon>
        <taxon>Halobacteriales</taxon>
        <taxon>Halobacteriaceae</taxon>
        <taxon>Halobacterium</taxon>
        <taxon>Halobacterium salinarum NRC-34001</taxon>
    </lineage>
</organism>
<keyword id="KW-0974">Archaeal flagellum</keyword>
<keyword id="KW-0325">Glycoprotein</keyword>
<keyword id="KW-1185">Reference proteome</keyword>
<comment type="function">
    <text>Flagellin is the subunit protein which polymerizes to form the filaments of archaeal flagella.</text>
</comment>
<comment type="subcellular location">
    <subcellularLocation>
        <location>Archaeal flagellum</location>
    </subcellularLocation>
</comment>
<comment type="PTM">
    <text>Glycosylated.</text>
</comment>
<comment type="similarity">
    <text evidence="2">Belongs to the archaeal flagellin family.</text>
</comment>
<comment type="sequence caution" evidence="2">
    <conflict type="erroneous initiation">
        <sequence resource="EMBL-CDS" id="AAG19384"/>
    </conflict>
</comment>
<feature type="propeptide" id="PRO_0000009369" evidence="1">
    <location>
        <begin position="1"/>
        <end position="12"/>
    </location>
</feature>
<feature type="chain" id="PRO_0000009370" description="Flagellin B2">
    <location>
        <begin position="13"/>
        <end position="196"/>
    </location>
</feature>